<protein>
    <recommendedName>
        <fullName evidence="1">GTPase Obg</fullName>
        <ecNumber evidence="1">3.6.5.-</ecNumber>
    </recommendedName>
    <alternativeName>
        <fullName evidence="1">GTP-binding protein Obg</fullName>
    </alternativeName>
</protein>
<proteinExistence type="inferred from homology"/>
<evidence type="ECO:0000255" key="1">
    <source>
        <dbReference type="HAMAP-Rule" id="MF_01454"/>
    </source>
</evidence>
<evidence type="ECO:0000255" key="2">
    <source>
        <dbReference type="PROSITE-ProRule" id="PRU01231"/>
    </source>
</evidence>
<evidence type="ECO:0000256" key="3">
    <source>
        <dbReference type="SAM" id="MobiDB-lite"/>
    </source>
</evidence>
<evidence type="ECO:0000305" key="4"/>
<organism>
    <name type="scientific">Buchnera aphidicola subsp. Acyrthosiphon pisum (strain APS)</name>
    <name type="common">Acyrthosiphon pisum symbiotic bacterium</name>
    <dbReference type="NCBI Taxonomy" id="107806"/>
    <lineage>
        <taxon>Bacteria</taxon>
        <taxon>Pseudomonadati</taxon>
        <taxon>Pseudomonadota</taxon>
        <taxon>Gammaproteobacteria</taxon>
        <taxon>Enterobacterales</taxon>
        <taxon>Erwiniaceae</taxon>
        <taxon>Buchnera</taxon>
    </lineage>
</organism>
<feature type="chain" id="PRO_0000205435" description="GTPase Obg">
    <location>
        <begin position="1"/>
        <end position="334"/>
    </location>
</feature>
<feature type="domain" description="Obg" evidence="2">
    <location>
        <begin position="1"/>
        <end position="159"/>
    </location>
</feature>
<feature type="domain" description="OBG-type G" evidence="1">
    <location>
        <begin position="160"/>
        <end position="333"/>
    </location>
</feature>
<feature type="region of interest" description="Disordered" evidence="3">
    <location>
        <begin position="67"/>
        <end position="86"/>
    </location>
</feature>
<feature type="compositionally biased region" description="Low complexity" evidence="3">
    <location>
        <begin position="68"/>
        <end position="77"/>
    </location>
</feature>
<feature type="binding site" evidence="1">
    <location>
        <begin position="166"/>
        <end position="173"/>
    </location>
    <ligand>
        <name>GTP</name>
        <dbReference type="ChEBI" id="CHEBI:37565"/>
    </ligand>
</feature>
<feature type="binding site" evidence="1">
    <location>
        <position position="173"/>
    </location>
    <ligand>
        <name>Mg(2+)</name>
        <dbReference type="ChEBI" id="CHEBI:18420"/>
    </ligand>
</feature>
<feature type="binding site" evidence="1">
    <location>
        <begin position="191"/>
        <end position="195"/>
    </location>
    <ligand>
        <name>GTP</name>
        <dbReference type="ChEBI" id="CHEBI:37565"/>
    </ligand>
</feature>
<feature type="binding site" evidence="1">
    <location>
        <position position="193"/>
    </location>
    <ligand>
        <name>Mg(2+)</name>
        <dbReference type="ChEBI" id="CHEBI:18420"/>
    </ligand>
</feature>
<feature type="binding site" evidence="1">
    <location>
        <begin position="213"/>
        <end position="216"/>
    </location>
    <ligand>
        <name>GTP</name>
        <dbReference type="ChEBI" id="CHEBI:37565"/>
    </ligand>
</feature>
<feature type="binding site" evidence="1">
    <location>
        <begin position="283"/>
        <end position="286"/>
    </location>
    <ligand>
        <name>GTP</name>
        <dbReference type="ChEBI" id="CHEBI:37565"/>
    </ligand>
</feature>
<feature type="binding site" evidence="1">
    <location>
        <begin position="314"/>
        <end position="316"/>
    </location>
    <ligand>
        <name>GTP</name>
        <dbReference type="ChEBI" id="CHEBI:37565"/>
    </ligand>
</feature>
<feature type="sequence conflict" description="In Ref. 2; CAB90993." evidence="4" ref="2">
    <original>L</original>
    <variation>P</variation>
    <location>
        <position position="293"/>
    </location>
</feature>
<reference key="1">
    <citation type="journal article" date="2000" name="Nature">
        <title>Genome sequence of the endocellular bacterial symbiont of aphids Buchnera sp. APS.</title>
        <authorList>
            <person name="Shigenobu S."/>
            <person name="Watanabe H."/>
            <person name="Hattori M."/>
            <person name="Sakaki Y."/>
            <person name="Ishikawa H."/>
        </authorList>
    </citation>
    <scope>NUCLEOTIDE SEQUENCE [LARGE SCALE GENOMIC DNA]</scope>
    <source>
        <strain>APS</strain>
    </source>
</reference>
<reference key="2">
    <citation type="journal article" date="2000" name="J. Bacteriol.">
        <title>Prephenate dehydratase from the aphid endosymbiont (Buchnera) displays changes in the regulatory domain that suggest its desensitization to inhibition by phenylalanine.</title>
        <authorList>
            <person name="Jimenez N."/>
            <person name="Gonzalez-Candelas F."/>
            <person name="Silva F.J."/>
        </authorList>
    </citation>
    <scope>NUCLEOTIDE SEQUENCE [GENOMIC DNA] OF 229-334</scope>
</reference>
<accession>P57469</accession>
<accession>Q9F455</accession>
<accession>Q9L4J5</accession>
<comment type="function">
    <text evidence="1">An essential GTPase which binds GTP, GDP and possibly (p)ppGpp with moderate affinity, with high nucleotide exchange rates and a fairly low GTP hydrolysis rate. Plays a role in control of the cell cycle, stress response, ribosome biogenesis and in those bacteria that undergo differentiation, in morphogenesis control.</text>
</comment>
<comment type="cofactor">
    <cofactor evidence="1">
        <name>Mg(2+)</name>
        <dbReference type="ChEBI" id="CHEBI:18420"/>
    </cofactor>
</comment>
<comment type="subunit">
    <text evidence="1">Monomer.</text>
</comment>
<comment type="subcellular location">
    <subcellularLocation>
        <location evidence="1">Cytoplasm</location>
    </subcellularLocation>
</comment>
<comment type="similarity">
    <text evidence="1">Belongs to the TRAFAC class OBG-HflX-like GTPase superfamily. OBG GTPase family.</text>
</comment>
<name>OBG_BUCAI</name>
<keyword id="KW-0963">Cytoplasm</keyword>
<keyword id="KW-0342">GTP-binding</keyword>
<keyword id="KW-0378">Hydrolase</keyword>
<keyword id="KW-0460">Magnesium</keyword>
<keyword id="KW-0479">Metal-binding</keyword>
<keyword id="KW-0547">Nucleotide-binding</keyword>
<keyword id="KW-1185">Reference proteome</keyword>
<gene>
    <name evidence="1" type="primary">obg</name>
    <name type="ordered locus">BU389</name>
</gene>
<sequence length="334" mass="37249">MKFIDQAIIHVIAGNGGNGCVSFRREKYIPKGGPDGGNGGDGGNIWLEANNNLNTLIDLRFKKKFQAQNGQNGSSRKSSGKKGDDIKIHVPIGTKVINYQTREIIGDLIQHKQKMLIAKGGWHGLGNARFKSSTNRTPRQSTLGSIGEKRDIQLELMLLADVGTLGMPNVGKSTLVTNISGAKTKISDYPFTTLHPVLGSVNIQKNKKFIIADIPGIIKGASYGAGLGIRFLKHLERCKLLLHIIDLVPQNNCHPSDNIKTVLNELKKYSLKLYNKPRWFIFNKIDLLSVEELNQIIKEIIFQFKIHEKYYLISSMKKIGIKKLCSDITKYLKK</sequence>
<dbReference type="EC" id="3.6.5.-" evidence="1"/>
<dbReference type="EMBL" id="BA000003">
    <property type="protein sequence ID" value="BAB13092.1"/>
    <property type="molecule type" value="Genomic_DNA"/>
</dbReference>
<dbReference type="EMBL" id="AJ239043">
    <property type="protein sequence ID" value="CAB90993.1"/>
    <property type="molecule type" value="Genomic_DNA"/>
</dbReference>
<dbReference type="RefSeq" id="NP_240206.1">
    <property type="nucleotide sequence ID" value="NC_002528.1"/>
</dbReference>
<dbReference type="SMR" id="P57469"/>
<dbReference type="STRING" id="563178.BUAP5A_382"/>
<dbReference type="EnsemblBacteria" id="BAB13092">
    <property type="protein sequence ID" value="BAB13092"/>
    <property type="gene ID" value="BAB13092"/>
</dbReference>
<dbReference type="KEGG" id="buc:BU389"/>
<dbReference type="PATRIC" id="fig|107806.10.peg.403"/>
<dbReference type="eggNOG" id="COG0536">
    <property type="taxonomic scope" value="Bacteria"/>
</dbReference>
<dbReference type="HOGENOM" id="CLU_011747_2_0_6"/>
<dbReference type="Proteomes" id="UP000001806">
    <property type="component" value="Chromosome"/>
</dbReference>
<dbReference type="GO" id="GO:0005737">
    <property type="term" value="C:cytoplasm"/>
    <property type="evidence" value="ECO:0007669"/>
    <property type="project" value="UniProtKB-SubCell"/>
</dbReference>
<dbReference type="GO" id="GO:0005525">
    <property type="term" value="F:GTP binding"/>
    <property type="evidence" value="ECO:0007669"/>
    <property type="project" value="UniProtKB-UniRule"/>
</dbReference>
<dbReference type="GO" id="GO:0003924">
    <property type="term" value="F:GTPase activity"/>
    <property type="evidence" value="ECO:0007669"/>
    <property type="project" value="UniProtKB-UniRule"/>
</dbReference>
<dbReference type="GO" id="GO:0000287">
    <property type="term" value="F:magnesium ion binding"/>
    <property type="evidence" value="ECO:0007669"/>
    <property type="project" value="InterPro"/>
</dbReference>
<dbReference type="GO" id="GO:0042254">
    <property type="term" value="P:ribosome biogenesis"/>
    <property type="evidence" value="ECO:0007669"/>
    <property type="project" value="UniProtKB-UniRule"/>
</dbReference>
<dbReference type="CDD" id="cd01898">
    <property type="entry name" value="Obg"/>
    <property type="match status" value="1"/>
</dbReference>
<dbReference type="FunFam" id="2.70.210.12:FF:000001">
    <property type="entry name" value="GTPase Obg"/>
    <property type="match status" value="1"/>
</dbReference>
<dbReference type="Gene3D" id="2.70.210.12">
    <property type="entry name" value="GTP1/OBG domain"/>
    <property type="match status" value="1"/>
</dbReference>
<dbReference type="Gene3D" id="3.40.50.300">
    <property type="entry name" value="P-loop containing nucleotide triphosphate hydrolases"/>
    <property type="match status" value="1"/>
</dbReference>
<dbReference type="HAMAP" id="MF_01454">
    <property type="entry name" value="GTPase_Obg"/>
    <property type="match status" value="1"/>
</dbReference>
<dbReference type="InterPro" id="IPR031167">
    <property type="entry name" value="G_OBG"/>
</dbReference>
<dbReference type="InterPro" id="IPR006073">
    <property type="entry name" value="GTP-bd"/>
</dbReference>
<dbReference type="InterPro" id="IPR014100">
    <property type="entry name" value="GTP-bd_Obg/CgtA"/>
</dbReference>
<dbReference type="InterPro" id="IPR006074">
    <property type="entry name" value="GTP1-OBG_CS"/>
</dbReference>
<dbReference type="InterPro" id="IPR006169">
    <property type="entry name" value="GTP1_OBG_dom"/>
</dbReference>
<dbReference type="InterPro" id="IPR036726">
    <property type="entry name" value="GTP1_OBG_dom_sf"/>
</dbReference>
<dbReference type="InterPro" id="IPR045086">
    <property type="entry name" value="OBG_GTPase"/>
</dbReference>
<dbReference type="InterPro" id="IPR027417">
    <property type="entry name" value="P-loop_NTPase"/>
</dbReference>
<dbReference type="NCBIfam" id="TIGR02729">
    <property type="entry name" value="Obg_CgtA"/>
    <property type="match status" value="1"/>
</dbReference>
<dbReference type="NCBIfam" id="NF008955">
    <property type="entry name" value="PRK12297.1"/>
    <property type="match status" value="1"/>
</dbReference>
<dbReference type="NCBIfam" id="NF008956">
    <property type="entry name" value="PRK12299.1"/>
    <property type="match status" value="1"/>
</dbReference>
<dbReference type="PANTHER" id="PTHR11702">
    <property type="entry name" value="DEVELOPMENTALLY REGULATED GTP-BINDING PROTEIN-RELATED"/>
    <property type="match status" value="1"/>
</dbReference>
<dbReference type="PANTHER" id="PTHR11702:SF31">
    <property type="entry name" value="MITOCHONDRIAL RIBOSOME-ASSOCIATED GTPASE 2"/>
    <property type="match status" value="1"/>
</dbReference>
<dbReference type="Pfam" id="PF01018">
    <property type="entry name" value="GTP1_OBG"/>
    <property type="match status" value="1"/>
</dbReference>
<dbReference type="Pfam" id="PF01926">
    <property type="entry name" value="MMR_HSR1"/>
    <property type="match status" value="1"/>
</dbReference>
<dbReference type="PIRSF" id="PIRSF002401">
    <property type="entry name" value="GTP_bd_Obg/CgtA"/>
    <property type="match status" value="1"/>
</dbReference>
<dbReference type="PRINTS" id="PR00326">
    <property type="entry name" value="GTP1OBG"/>
</dbReference>
<dbReference type="SUPFAM" id="SSF82051">
    <property type="entry name" value="Obg GTP-binding protein N-terminal domain"/>
    <property type="match status" value="1"/>
</dbReference>
<dbReference type="SUPFAM" id="SSF52540">
    <property type="entry name" value="P-loop containing nucleoside triphosphate hydrolases"/>
    <property type="match status" value="1"/>
</dbReference>
<dbReference type="PROSITE" id="PS51710">
    <property type="entry name" value="G_OBG"/>
    <property type="match status" value="1"/>
</dbReference>
<dbReference type="PROSITE" id="PS00905">
    <property type="entry name" value="GTP1_OBG"/>
    <property type="match status" value="1"/>
</dbReference>
<dbReference type="PROSITE" id="PS51883">
    <property type="entry name" value="OBG"/>
    <property type="match status" value="1"/>
</dbReference>